<sequence>MALLNILQYPDERLHTVAKPVEQVDERIRKLVADMFETMYESRGIGLAATQVDVHERVVVMDLTEDRSEPRVFINPVIVEKDGETTYEEGCLSVPGIYDAVTRAERVKVEALNEKGEKFTLEADGLLAICVQHELDHLMGIVFVERLSQLKQGRIKTKLKKRQKHTI</sequence>
<gene>
    <name evidence="1" type="primary">def</name>
    <name type="ordered locus">NGO_1871</name>
</gene>
<evidence type="ECO:0000255" key="1">
    <source>
        <dbReference type="HAMAP-Rule" id="MF_00163"/>
    </source>
</evidence>
<feature type="chain" id="PRO_0000301066" description="Peptide deformylase">
    <location>
        <begin position="1"/>
        <end position="167"/>
    </location>
</feature>
<feature type="active site" evidence="1">
    <location>
        <position position="134"/>
    </location>
</feature>
<feature type="binding site" evidence="1">
    <location>
        <position position="91"/>
    </location>
    <ligand>
        <name>Fe cation</name>
        <dbReference type="ChEBI" id="CHEBI:24875"/>
    </ligand>
</feature>
<feature type="binding site" evidence="1">
    <location>
        <position position="133"/>
    </location>
    <ligand>
        <name>Fe cation</name>
        <dbReference type="ChEBI" id="CHEBI:24875"/>
    </ligand>
</feature>
<feature type="binding site" evidence="1">
    <location>
        <position position="137"/>
    </location>
    <ligand>
        <name>Fe cation</name>
        <dbReference type="ChEBI" id="CHEBI:24875"/>
    </ligand>
</feature>
<organism>
    <name type="scientific">Neisseria gonorrhoeae (strain ATCC 700825 / FA 1090)</name>
    <dbReference type="NCBI Taxonomy" id="242231"/>
    <lineage>
        <taxon>Bacteria</taxon>
        <taxon>Pseudomonadati</taxon>
        <taxon>Pseudomonadota</taxon>
        <taxon>Betaproteobacteria</taxon>
        <taxon>Neisseriales</taxon>
        <taxon>Neisseriaceae</taxon>
        <taxon>Neisseria</taxon>
    </lineage>
</organism>
<reference key="1">
    <citation type="submission" date="2003-03" db="EMBL/GenBank/DDBJ databases">
        <title>The complete genome sequence of Neisseria gonorrhoeae.</title>
        <authorList>
            <person name="Lewis L.A."/>
            <person name="Gillaspy A.F."/>
            <person name="McLaughlin R.E."/>
            <person name="Gipson M."/>
            <person name="Ducey T.F."/>
            <person name="Ownbey T."/>
            <person name="Hartman K."/>
            <person name="Nydick C."/>
            <person name="Carson M.B."/>
            <person name="Vaughn J."/>
            <person name="Thomson C."/>
            <person name="Song L."/>
            <person name="Lin S."/>
            <person name="Yuan X."/>
            <person name="Najar F."/>
            <person name="Zhan M."/>
            <person name="Ren Q."/>
            <person name="Zhu H."/>
            <person name="Qi S."/>
            <person name="Kenton S.M."/>
            <person name="Lai H."/>
            <person name="White J.D."/>
            <person name="Clifton S."/>
            <person name="Roe B.A."/>
            <person name="Dyer D.W."/>
        </authorList>
    </citation>
    <scope>NUCLEOTIDE SEQUENCE [LARGE SCALE GENOMIC DNA]</scope>
    <source>
        <strain>ATCC 700825 / FA 1090</strain>
    </source>
</reference>
<name>DEF_NEIG1</name>
<keyword id="KW-0378">Hydrolase</keyword>
<keyword id="KW-0408">Iron</keyword>
<keyword id="KW-0479">Metal-binding</keyword>
<keyword id="KW-0648">Protein biosynthesis</keyword>
<keyword id="KW-1185">Reference proteome</keyword>
<comment type="function">
    <text evidence="1">Removes the formyl group from the N-terminal Met of newly synthesized proteins. Requires at least a dipeptide for an efficient rate of reaction. N-terminal L-methionine is a prerequisite for activity but the enzyme has broad specificity at other positions.</text>
</comment>
<comment type="catalytic activity">
    <reaction evidence="1">
        <text>N-terminal N-formyl-L-methionyl-[peptide] + H2O = N-terminal L-methionyl-[peptide] + formate</text>
        <dbReference type="Rhea" id="RHEA:24420"/>
        <dbReference type="Rhea" id="RHEA-COMP:10639"/>
        <dbReference type="Rhea" id="RHEA-COMP:10640"/>
        <dbReference type="ChEBI" id="CHEBI:15377"/>
        <dbReference type="ChEBI" id="CHEBI:15740"/>
        <dbReference type="ChEBI" id="CHEBI:49298"/>
        <dbReference type="ChEBI" id="CHEBI:64731"/>
        <dbReference type="EC" id="3.5.1.88"/>
    </reaction>
</comment>
<comment type="cofactor">
    <cofactor evidence="1">
        <name>Fe(2+)</name>
        <dbReference type="ChEBI" id="CHEBI:29033"/>
    </cofactor>
    <text evidence="1">Binds 1 Fe(2+) ion.</text>
</comment>
<comment type="similarity">
    <text evidence="1">Belongs to the polypeptide deformylase family.</text>
</comment>
<accession>Q5F5P6</accession>
<proteinExistence type="inferred from homology"/>
<dbReference type="EC" id="3.5.1.88" evidence="1"/>
<dbReference type="EMBL" id="AE004969">
    <property type="protein sequence ID" value="AAW90491.1"/>
    <property type="molecule type" value="Genomic_DNA"/>
</dbReference>
<dbReference type="RefSeq" id="WP_003690288.1">
    <property type="nucleotide sequence ID" value="NC_002946.2"/>
</dbReference>
<dbReference type="RefSeq" id="YP_208903.1">
    <property type="nucleotide sequence ID" value="NC_002946.2"/>
</dbReference>
<dbReference type="SMR" id="Q5F5P6"/>
<dbReference type="STRING" id="242231.NGO_1871"/>
<dbReference type="GeneID" id="66754255"/>
<dbReference type="KEGG" id="ngo:NGO_1871"/>
<dbReference type="PATRIC" id="fig|242231.10.peg.2249"/>
<dbReference type="HOGENOM" id="CLU_061901_2_1_4"/>
<dbReference type="Proteomes" id="UP000000535">
    <property type="component" value="Chromosome"/>
</dbReference>
<dbReference type="GO" id="GO:0046872">
    <property type="term" value="F:metal ion binding"/>
    <property type="evidence" value="ECO:0007669"/>
    <property type="project" value="UniProtKB-KW"/>
</dbReference>
<dbReference type="GO" id="GO:0042586">
    <property type="term" value="F:peptide deformylase activity"/>
    <property type="evidence" value="ECO:0007669"/>
    <property type="project" value="UniProtKB-UniRule"/>
</dbReference>
<dbReference type="GO" id="GO:0043686">
    <property type="term" value="P:co-translational protein modification"/>
    <property type="evidence" value="ECO:0007669"/>
    <property type="project" value="TreeGrafter"/>
</dbReference>
<dbReference type="GO" id="GO:0006412">
    <property type="term" value="P:translation"/>
    <property type="evidence" value="ECO:0007669"/>
    <property type="project" value="UniProtKB-UniRule"/>
</dbReference>
<dbReference type="CDD" id="cd00487">
    <property type="entry name" value="Pep_deformylase"/>
    <property type="match status" value="1"/>
</dbReference>
<dbReference type="FunFam" id="3.90.45.10:FF:000001">
    <property type="entry name" value="Peptide deformylase"/>
    <property type="match status" value="1"/>
</dbReference>
<dbReference type="Gene3D" id="3.90.45.10">
    <property type="entry name" value="Peptide deformylase"/>
    <property type="match status" value="1"/>
</dbReference>
<dbReference type="HAMAP" id="MF_00163">
    <property type="entry name" value="Pep_deformylase"/>
    <property type="match status" value="1"/>
</dbReference>
<dbReference type="InterPro" id="IPR023635">
    <property type="entry name" value="Peptide_deformylase"/>
</dbReference>
<dbReference type="InterPro" id="IPR036821">
    <property type="entry name" value="Peptide_deformylase_sf"/>
</dbReference>
<dbReference type="NCBIfam" id="TIGR00079">
    <property type="entry name" value="pept_deformyl"/>
    <property type="match status" value="1"/>
</dbReference>
<dbReference type="NCBIfam" id="NF001159">
    <property type="entry name" value="PRK00150.1-3"/>
    <property type="match status" value="1"/>
</dbReference>
<dbReference type="PANTHER" id="PTHR10458">
    <property type="entry name" value="PEPTIDE DEFORMYLASE"/>
    <property type="match status" value="1"/>
</dbReference>
<dbReference type="PANTHER" id="PTHR10458:SF22">
    <property type="entry name" value="PEPTIDE DEFORMYLASE"/>
    <property type="match status" value="1"/>
</dbReference>
<dbReference type="Pfam" id="PF01327">
    <property type="entry name" value="Pep_deformylase"/>
    <property type="match status" value="1"/>
</dbReference>
<dbReference type="PIRSF" id="PIRSF004749">
    <property type="entry name" value="Pep_def"/>
    <property type="match status" value="1"/>
</dbReference>
<dbReference type="PRINTS" id="PR01576">
    <property type="entry name" value="PDEFORMYLASE"/>
</dbReference>
<dbReference type="SUPFAM" id="SSF56420">
    <property type="entry name" value="Peptide deformylase"/>
    <property type="match status" value="1"/>
</dbReference>
<protein>
    <recommendedName>
        <fullName evidence="1">Peptide deformylase</fullName>
        <shortName evidence="1">PDF</shortName>
        <ecNumber evidence="1">3.5.1.88</ecNumber>
    </recommendedName>
    <alternativeName>
        <fullName evidence="1">Polypeptide deformylase</fullName>
    </alternativeName>
</protein>